<comment type="catalytic activity">
    <reaction evidence="1">
        <text>tRNA(Arg) + L-arginine + ATP = L-arginyl-tRNA(Arg) + AMP + diphosphate</text>
        <dbReference type="Rhea" id="RHEA:20301"/>
        <dbReference type="Rhea" id="RHEA-COMP:9658"/>
        <dbReference type="Rhea" id="RHEA-COMP:9673"/>
        <dbReference type="ChEBI" id="CHEBI:30616"/>
        <dbReference type="ChEBI" id="CHEBI:32682"/>
        <dbReference type="ChEBI" id="CHEBI:33019"/>
        <dbReference type="ChEBI" id="CHEBI:78442"/>
        <dbReference type="ChEBI" id="CHEBI:78513"/>
        <dbReference type="ChEBI" id="CHEBI:456215"/>
        <dbReference type="EC" id="6.1.1.19"/>
    </reaction>
</comment>
<comment type="subunit">
    <text evidence="1">Monomer.</text>
</comment>
<comment type="subcellular location">
    <subcellularLocation>
        <location evidence="1">Cytoplasm</location>
    </subcellularLocation>
</comment>
<comment type="similarity">
    <text evidence="1">Belongs to the class-I aminoacyl-tRNA synthetase family.</text>
</comment>
<feature type="chain" id="PRO_1000198911" description="Arginine--tRNA ligase">
    <location>
        <begin position="1"/>
        <end position="566"/>
    </location>
</feature>
<feature type="short sequence motif" description="'HIGH' region">
    <location>
        <begin position="123"/>
        <end position="133"/>
    </location>
</feature>
<organism>
    <name type="scientific">Halothermothrix orenii (strain H 168 / OCM 544 / DSM 9562)</name>
    <dbReference type="NCBI Taxonomy" id="373903"/>
    <lineage>
        <taxon>Bacteria</taxon>
        <taxon>Bacillati</taxon>
        <taxon>Bacillota</taxon>
        <taxon>Clostridia</taxon>
        <taxon>Halanaerobiales</taxon>
        <taxon>Halothermotrichaceae</taxon>
        <taxon>Halothermothrix</taxon>
    </lineage>
</organism>
<keyword id="KW-0030">Aminoacyl-tRNA synthetase</keyword>
<keyword id="KW-0067">ATP-binding</keyword>
<keyword id="KW-0963">Cytoplasm</keyword>
<keyword id="KW-0436">Ligase</keyword>
<keyword id="KW-0547">Nucleotide-binding</keyword>
<keyword id="KW-0648">Protein biosynthesis</keyword>
<keyword id="KW-1185">Reference proteome</keyword>
<accession>B8CWA9</accession>
<sequence>MIDFKEKLVDLISQEINDLNVEEIEHLIEIPPQPEMGDYALPCFKFAGIFKKAPNIIAEEIASKIEGNSYFSKVVNTGPYVNFFINKEIFAETVLEEILQKGKYYGARNIGKGKNVIVEFSSPNIAKPFHIGHIRTTVIGHALRNIYNFLGYNAIAINHLGDYGTQFGKLIVALNKWGDKDKIKSNPIPEFLKLYIKFHEEAEKNPELEEKARSWFNRLENKDEEAMDLWKWIRNMSLKEFKRVYDMLGIDFDSYAGESFYSDMMPDVIEEMEEKGLLQESQGAKIVDLEEYNMPPAMIEKSDGSTLYITRDIAAAIYRKKTYNFYKNIYVVGSQQKLHFDQWFKIIELMGHEWARDCIHVPFGMVSLEDGTMSTRKGRVVFLEDVLNKAIEKTKETIEDKNPDLENKEEVAKIVGIGAVIFQELYNSRIKDYVFSWDRTLSFEGETGPYVQYTYVRTKSVLNKSNYKFKKLDDYSLLTDEDAFNVIKLISQFPDTIIKASERYEPSIITRHITELAKAFNKYYHDNQILVDDQKVREARLFLVYAVNTVLKTGLSLLGIKTPEKM</sequence>
<evidence type="ECO:0000255" key="1">
    <source>
        <dbReference type="HAMAP-Rule" id="MF_00123"/>
    </source>
</evidence>
<protein>
    <recommendedName>
        <fullName evidence="1">Arginine--tRNA ligase</fullName>
        <ecNumber evidence="1">6.1.1.19</ecNumber>
    </recommendedName>
    <alternativeName>
        <fullName evidence="1">Arginyl-tRNA synthetase</fullName>
        <shortName evidence="1">ArgRS</shortName>
    </alternativeName>
</protein>
<proteinExistence type="inferred from homology"/>
<dbReference type="EC" id="6.1.1.19" evidence="1"/>
<dbReference type="EMBL" id="CP001098">
    <property type="protein sequence ID" value="ACL69578.1"/>
    <property type="molecule type" value="Genomic_DNA"/>
</dbReference>
<dbReference type="RefSeq" id="WP_012635766.1">
    <property type="nucleotide sequence ID" value="NC_011899.1"/>
</dbReference>
<dbReference type="SMR" id="B8CWA9"/>
<dbReference type="STRING" id="373903.Hore_08210"/>
<dbReference type="KEGG" id="hor:Hore_08210"/>
<dbReference type="eggNOG" id="COG0018">
    <property type="taxonomic scope" value="Bacteria"/>
</dbReference>
<dbReference type="HOGENOM" id="CLU_006406_6_1_9"/>
<dbReference type="OrthoDB" id="9805987at2"/>
<dbReference type="Proteomes" id="UP000000719">
    <property type="component" value="Chromosome"/>
</dbReference>
<dbReference type="GO" id="GO:0005737">
    <property type="term" value="C:cytoplasm"/>
    <property type="evidence" value="ECO:0007669"/>
    <property type="project" value="UniProtKB-SubCell"/>
</dbReference>
<dbReference type="GO" id="GO:0004814">
    <property type="term" value="F:arginine-tRNA ligase activity"/>
    <property type="evidence" value="ECO:0007669"/>
    <property type="project" value="UniProtKB-UniRule"/>
</dbReference>
<dbReference type="GO" id="GO:0005524">
    <property type="term" value="F:ATP binding"/>
    <property type="evidence" value="ECO:0007669"/>
    <property type="project" value="UniProtKB-UniRule"/>
</dbReference>
<dbReference type="GO" id="GO:0006420">
    <property type="term" value="P:arginyl-tRNA aminoacylation"/>
    <property type="evidence" value="ECO:0007669"/>
    <property type="project" value="UniProtKB-UniRule"/>
</dbReference>
<dbReference type="CDD" id="cd07956">
    <property type="entry name" value="Anticodon_Ia_Arg"/>
    <property type="match status" value="1"/>
</dbReference>
<dbReference type="CDD" id="cd00671">
    <property type="entry name" value="ArgRS_core"/>
    <property type="match status" value="1"/>
</dbReference>
<dbReference type="FunFam" id="3.40.50.620:FF:000116">
    <property type="entry name" value="Arginine--tRNA ligase"/>
    <property type="match status" value="1"/>
</dbReference>
<dbReference type="FunFam" id="1.10.730.10:FF:000006">
    <property type="entry name" value="Arginyl-tRNA synthetase 2, mitochondrial"/>
    <property type="match status" value="1"/>
</dbReference>
<dbReference type="Gene3D" id="3.30.1360.70">
    <property type="entry name" value="Arginyl tRNA synthetase N-terminal domain"/>
    <property type="match status" value="1"/>
</dbReference>
<dbReference type="Gene3D" id="3.40.50.620">
    <property type="entry name" value="HUPs"/>
    <property type="match status" value="1"/>
</dbReference>
<dbReference type="Gene3D" id="1.10.730.10">
    <property type="entry name" value="Isoleucyl-tRNA Synthetase, Domain 1"/>
    <property type="match status" value="1"/>
</dbReference>
<dbReference type="HAMAP" id="MF_00123">
    <property type="entry name" value="Arg_tRNA_synth"/>
    <property type="match status" value="1"/>
</dbReference>
<dbReference type="InterPro" id="IPR001412">
    <property type="entry name" value="aa-tRNA-synth_I_CS"/>
</dbReference>
<dbReference type="InterPro" id="IPR001278">
    <property type="entry name" value="Arg-tRNA-ligase"/>
</dbReference>
<dbReference type="InterPro" id="IPR005148">
    <property type="entry name" value="Arg-tRNA-synth_N"/>
</dbReference>
<dbReference type="InterPro" id="IPR036695">
    <property type="entry name" value="Arg-tRNA-synth_N_sf"/>
</dbReference>
<dbReference type="InterPro" id="IPR035684">
    <property type="entry name" value="ArgRS_core"/>
</dbReference>
<dbReference type="InterPro" id="IPR008909">
    <property type="entry name" value="DALR_anticod-bd"/>
</dbReference>
<dbReference type="InterPro" id="IPR014729">
    <property type="entry name" value="Rossmann-like_a/b/a_fold"/>
</dbReference>
<dbReference type="InterPro" id="IPR009080">
    <property type="entry name" value="tRNAsynth_Ia_anticodon-bd"/>
</dbReference>
<dbReference type="NCBIfam" id="TIGR00456">
    <property type="entry name" value="argS"/>
    <property type="match status" value="1"/>
</dbReference>
<dbReference type="PANTHER" id="PTHR11956:SF5">
    <property type="entry name" value="ARGININE--TRNA LIGASE, CYTOPLASMIC"/>
    <property type="match status" value="1"/>
</dbReference>
<dbReference type="PANTHER" id="PTHR11956">
    <property type="entry name" value="ARGINYL-TRNA SYNTHETASE"/>
    <property type="match status" value="1"/>
</dbReference>
<dbReference type="Pfam" id="PF03485">
    <property type="entry name" value="Arg_tRNA_synt_N"/>
    <property type="match status" value="1"/>
</dbReference>
<dbReference type="Pfam" id="PF05746">
    <property type="entry name" value="DALR_1"/>
    <property type="match status" value="1"/>
</dbReference>
<dbReference type="Pfam" id="PF00750">
    <property type="entry name" value="tRNA-synt_1d"/>
    <property type="match status" value="1"/>
</dbReference>
<dbReference type="PRINTS" id="PR01038">
    <property type="entry name" value="TRNASYNTHARG"/>
</dbReference>
<dbReference type="SMART" id="SM01016">
    <property type="entry name" value="Arg_tRNA_synt_N"/>
    <property type="match status" value="1"/>
</dbReference>
<dbReference type="SMART" id="SM00836">
    <property type="entry name" value="DALR_1"/>
    <property type="match status" value="1"/>
</dbReference>
<dbReference type="SUPFAM" id="SSF47323">
    <property type="entry name" value="Anticodon-binding domain of a subclass of class I aminoacyl-tRNA synthetases"/>
    <property type="match status" value="1"/>
</dbReference>
<dbReference type="SUPFAM" id="SSF55190">
    <property type="entry name" value="Arginyl-tRNA synthetase (ArgRS), N-terminal 'additional' domain"/>
    <property type="match status" value="1"/>
</dbReference>
<dbReference type="SUPFAM" id="SSF52374">
    <property type="entry name" value="Nucleotidylyl transferase"/>
    <property type="match status" value="1"/>
</dbReference>
<dbReference type="PROSITE" id="PS00178">
    <property type="entry name" value="AA_TRNA_LIGASE_I"/>
    <property type="match status" value="1"/>
</dbReference>
<reference key="1">
    <citation type="journal article" date="2009" name="PLoS ONE">
        <title>Genome analysis of the anaerobic thermohalophilic bacterium Halothermothrix orenii.</title>
        <authorList>
            <person name="Mavromatis K."/>
            <person name="Ivanova N."/>
            <person name="Anderson I."/>
            <person name="Lykidis A."/>
            <person name="Hooper S.D."/>
            <person name="Sun H."/>
            <person name="Kunin V."/>
            <person name="Lapidus A."/>
            <person name="Hugenholtz P."/>
            <person name="Patel B."/>
            <person name="Kyrpides N.C."/>
        </authorList>
    </citation>
    <scope>NUCLEOTIDE SEQUENCE [LARGE SCALE GENOMIC DNA]</scope>
    <source>
        <strain>H 168 / OCM 544 / DSM 9562</strain>
    </source>
</reference>
<gene>
    <name evidence="1" type="primary">argS</name>
    <name type="ordered locus">Hore_08210</name>
</gene>
<name>SYR_HALOH</name>